<dbReference type="EC" id="3.1.1.-"/>
<dbReference type="EMBL" id="AC011765">
    <property type="protein sequence ID" value="AAG52368.1"/>
    <property type="molecule type" value="Genomic_DNA"/>
</dbReference>
<dbReference type="EMBL" id="CP002684">
    <property type="protein sequence ID" value="AEE35596.1"/>
    <property type="molecule type" value="Genomic_DNA"/>
</dbReference>
<dbReference type="EMBL" id="AY086964">
    <property type="protein sequence ID" value="AAM64527.1"/>
    <property type="molecule type" value="mRNA"/>
</dbReference>
<dbReference type="EMBL" id="AK228117">
    <property type="protein sequence ID" value="BAF00075.1"/>
    <property type="molecule type" value="mRNA"/>
</dbReference>
<dbReference type="EMBL" id="BT003119">
    <property type="protein sequence ID" value="AAO24551.1"/>
    <property type="molecule type" value="mRNA"/>
</dbReference>
<dbReference type="PIR" id="E96773">
    <property type="entry name" value="E96773"/>
</dbReference>
<dbReference type="RefSeq" id="NP_177586.1">
    <property type="nucleotide sequence ID" value="NM_106106.3"/>
</dbReference>
<dbReference type="SMR" id="Q9CA68"/>
<dbReference type="FunCoup" id="Q9CA68">
    <property type="interactions" value="105"/>
</dbReference>
<dbReference type="STRING" id="3702.Q9CA68"/>
<dbReference type="GlyGen" id="Q9CA68">
    <property type="glycosylation" value="2 sites"/>
</dbReference>
<dbReference type="PaxDb" id="3702-AT1G74460.1"/>
<dbReference type="ProteomicsDB" id="221972"/>
<dbReference type="EnsemblPlants" id="AT1G74460.1">
    <property type="protein sequence ID" value="AT1G74460.1"/>
    <property type="gene ID" value="AT1G74460"/>
</dbReference>
<dbReference type="GeneID" id="843787"/>
<dbReference type="Gramene" id="AT1G74460.1">
    <property type="protein sequence ID" value="AT1G74460.1"/>
    <property type="gene ID" value="AT1G74460"/>
</dbReference>
<dbReference type="KEGG" id="ath:AT1G74460"/>
<dbReference type="Araport" id="AT1G74460"/>
<dbReference type="TAIR" id="AT1G74460"/>
<dbReference type="eggNOG" id="ENOG502QU4Z">
    <property type="taxonomic scope" value="Eukaryota"/>
</dbReference>
<dbReference type="HOGENOM" id="CLU_015101_0_0_1"/>
<dbReference type="InParanoid" id="Q9CA68"/>
<dbReference type="OMA" id="GSCKVVQ"/>
<dbReference type="OrthoDB" id="1600564at2759"/>
<dbReference type="PhylomeDB" id="Q9CA68"/>
<dbReference type="BioCyc" id="ARA:AT1G74460-MONOMER"/>
<dbReference type="PRO" id="PR:Q9CA68"/>
<dbReference type="Proteomes" id="UP000006548">
    <property type="component" value="Chromosome 1"/>
</dbReference>
<dbReference type="ExpressionAtlas" id="Q9CA68">
    <property type="expression patterns" value="baseline and differential"/>
</dbReference>
<dbReference type="GO" id="GO:0005576">
    <property type="term" value="C:extracellular region"/>
    <property type="evidence" value="ECO:0007669"/>
    <property type="project" value="UniProtKB-SubCell"/>
</dbReference>
<dbReference type="GO" id="GO:0016788">
    <property type="term" value="F:hydrolase activity, acting on ester bonds"/>
    <property type="evidence" value="ECO:0007669"/>
    <property type="project" value="InterPro"/>
</dbReference>
<dbReference type="GO" id="GO:0016042">
    <property type="term" value="P:lipid catabolic process"/>
    <property type="evidence" value="ECO:0007669"/>
    <property type="project" value="UniProtKB-KW"/>
</dbReference>
<dbReference type="CDD" id="cd01837">
    <property type="entry name" value="SGNH_plant_lipase_like"/>
    <property type="match status" value="1"/>
</dbReference>
<dbReference type="Gene3D" id="3.40.50.1110">
    <property type="entry name" value="SGNH hydrolase"/>
    <property type="match status" value="1"/>
</dbReference>
<dbReference type="InterPro" id="IPR001087">
    <property type="entry name" value="GDSL"/>
</dbReference>
<dbReference type="InterPro" id="IPR051058">
    <property type="entry name" value="GDSL_Est/Lipase"/>
</dbReference>
<dbReference type="InterPro" id="IPR036514">
    <property type="entry name" value="SGNH_hydro_sf"/>
</dbReference>
<dbReference type="InterPro" id="IPR035669">
    <property type="entry name" value="SGNH_plant_lipase-like"/>
</dbReference>
<dbReference type="PANTHER" id="PTHR45648">
    <property type="entry name" value="GDSL LIPASE/ACYLHYDROLASE FAMILY PROTEIN (AFU_ORTHOLOGUE AFUA_4G14700)"/>
    <property type="match status" value="1"/>
</dbReference>
<dbReference type="PANTHER" id="PTHR45648:SF8">
    <property type="entry name" value="ZINC FINGER PROTEIN"/>
    <property type="match status" value="1"/>
</dbReference>
<dbReference type="Pfam" id="PF00657">
    <property type="entry name" value="Lipase_GDSL"/>
    <property type="match status" value="1"/>
</dbReference>
<dbReference type="SUPFAM" id="SSF52266">
    <property type="entry name" value="SGNH hydrolase"/>
    <property type="match status" value="1"/>
</dbReference>
<gene>
    <name type="ordered locus">At1g74460</name>
    <name type="ORF">F1M20.14</name>
</gene>
<organism>
    <name type="scientific">Arabidopsis thaliana</name>
    <name type="common">Mouse-ear cress</name>
    <dbReference type="NCBI Taxonomy" id="3702"/>
    <lineage>
        <taxon>Eukaryota</taxon>
        <taxon>Viridiplantae</taxon>
        <taxon>Streptophyta</taxon>
        <taxon>Embryophyta</taxon>
        <taxon>Tracheophyta</taxon>
        <taxon>Spermatophyta</taxon>
        <taxon>Magnoliopsida</taxon>
        <taxon>eudicotyledons</taxon>
        <taxon>Gunneridae</taxon>
        <taxon>Pentapetalae</taxon>
        <taxon>rosids</taxon>
        <taxon>malvids</taxon>
        <taxon>Brassicales</taxon>
        <taxon>Brassicaceae</taxon>
        <taxon>Camelineae</taxon>
        <taxon>Arabidopsis</taxon>
    </lineage>
</organism>
<comment type="subcellular location">
    <subcellularLocation>
        <location evidence="3">Secreted</location>
    </subcellularLocation>
</comment>
<comment type="similarity">
    <text evidence="3">Belongs to the 'GDSL' lipolytic enzyme family.</text>
</comment>
<sequence>MKFCAIFVLFIVLAINGYDCKIVQFIFGDSLSDVGNNKNLPRSLATANLPFYGIDFGNGLPNGRFTNGRTVSDIIGDKIGLPRPVAFLDPSMNEDVILENGVNYASGGGGILNETGGYFIQRFSLWKQIELFQGTQDVVVAKIGKKEADKFFQDARYVVALGSNDFINNYLMPVYSDSWKYNDQTFVDYLMETLESQLKVLHSLGARKLMVFGLGPMGCIPLQRALSLDGNCQNKASNLAKRFNKAATTMLLDLETKLPNASYRFGEAYDLVNDVITNPKKYGFDNSDSPCCSFYRIRPALTCIPASTLCKDRSKYVFWDEYHPTDKANELVANILIKRFDFMRADDGISHAPSPAPDISPSSDNN</sequence>
<proteinExistence type="evidence at transcript level"/>
<reference key="1">
    <citation type="journal article" date="2000" name="Nature">
        <title>Sequence and analysis of chromosome 1 of the plant Arabidopsis thaliana.</title>
        <authorList>
            <person name="Theologis A."/>
            <person name="Ecker J.R."/>
            <person name="Palm C.J."/>
            <person name="Federspiel N.A."/>
            <person name="Kaul S."/>
            <person name="White O."/>
            <person name="Alonso J."/>
            <person name="Altafi H."/>
            <person name="Araujo R."/>
            <person name="Bowman C.L."/>
            <person name="Brooks S.Y."/>
            <person name="Buehler E."/>
            <person name="Chan A."/>
            <person name="Chao Q."/>
            <person name="Chen H."/>
            <person name="Cheuk R.F."/>
            <person name="Chin C.W."/>
            <person name="Chung M.K."/>
            <person name="Conn L."/>
            <person name="Conway A.B."/>
            <person name="Conway A.R."/>
            <person name="Creasy T.H."/>
            <person name="Dewar K."/>
            <person name="Dunn P."/>
            <person name="Etgu P."/>
            <person name="Feldblyum T.V."/>
            <person name="Feng J.-D."/>
            <person name="Fong B."/>
            <person name="Fujii C.Y."/>
            <person name="Gill J.E."/>
            <person name="Goldsmith A.D."/>
            <person name="Haas B."/>
            <person name="Hansen N.F."/>
            <person name="Hughes B."/>
            <person name="Huizar L."/>
            <person name="Hunter J.L."/>
            <person name="Jenkins J."/>
            <person name="Johnson-Hopson C."/>
            <person name="Khan S."/>
            <person name="Khaykin E."/>
            <person name="Kim C.J."/>
            <person name="Koo H.L."/>
            <person name="Kremenetskaia I."/>
            <person name="Kurtz D.B."/>
            <person name="Kwan A."/>
            <person name="Lam B."/>
            <person name="Langin-Hooper S."/>
            <person name="Lee A."/>
            <person name="Lee J.M."/>
            <person name="Lenz C.A."/>
            <person name="Li J.H."/>
            <person name="Li Y.-P."/>
            <person name="Lin X."/>
            <person name="Liu S.X."/>
            <person name="Liu Z.A."/>
            <person name="Luros J.S."/>
            <person name="Maiti R."/>
            <person name="Marziali A."/>
            <person name="Militscher J."/>
            <person name="Miranda M."/>
            <person name="Nguyen M."/>
            <person name="Nierman W.C."/>
            <person name="Osborne B.I."/>
            <person name="Pai G."/>
            <person name="Peterson J."/>
            <person name="Pham P.K."/>
            <person name="Rizzo M."/>
            <person name="Rooney T."/>
            <person name="Rowley D."/>
            <person name="Sakano H."/>
            <person name="Salzberg S.L."/>
            <person name="Schwartz J.R."/>
            <person name="Shinn P."/>
            <person name="Southwick A.M."/>
            <person name="Sun H."/>
            <person name="Tallon L.J."/>
            <person name="Tambunga G."/>
            <person name="Toriumi M.J."/>
            <person name="Town C.D."/>
            <person name="Utterback T."/>
            <person name="Van Aken S."/>
            <person name="Vaysberg M."/>
            <person name="Vysotskaia V.S."/>
            <person name="Walker M."/>
            <person name="Wu D."/>
            <person name="Yu G."/>
            <person name="Fraser C.M."/>
            <person name="Venter J.C."/>
            <person name="Davis R.W."/>
        </authorList>
    </citation>
    <scope>NUCLEOTIDE SEQUENCE [LARGE SCALE GENOMIC DNA]</scope>
    <source>
        <strain>cv. Columbia</strain>
    </source>
</reference>
<reference key="2">
    <citation type="journal article" date="2017" name="Plant J.">
        <title>Araport11: a complete reannotation of the Arabidopsis thaliana reference genome.</title>
        <authorList>
            <person name="Cheng C.Y."/>
            <person name="Krishnakumar V."/>
            <person name="Chan A.P."/>
            <person name="Thibaud-Nissen F."/>
            <person name="Schobel S."/>
            <person name="Town C.D."/>
        </authorList>
    </citation>
    <scope>GENOME REANNOTATION</scope>
    <source>
        <strain>cv. Columbia</strain>
    </source>
</reference>
<reference key="3">
    <citation type="submission" date="2002-03" db="EMBL/GenBank/DDBJ databases">
        <title>Full-length cDNA from Arabidopsis thaliana.</title>
        <authorList>
            <person name="Brover V.V."/>
            <person name="Troukhan M.E."/>
            <person name="Alexandrov N.A."/>
            <person name="Lu Y.-P."/>
            <person name="Flavell R.B."/>
            <person name="Feldmann K.A."/>
        </authorList>
    </citation>
    <scope>NUCLEOTIDE SEQUENCE [LARGE SCALE MRNA]</scope>
</reference>
<reference key="4">
    <citation type="submission" date="2006-07" db="EMBL/GenBank/DDBJ databases">
        <title>Large-scale analysis of RIKEN Arabidopsis full-length (RAFL) cDNAs.</title>
        <authorList>
            <person name="Totoki Y."/>
            <person name="Seki M."/>
            <person name="Ishida J."/>
            <person name="Nakajima M."/>
            <person name="Enju A."/>
            <person name="Kamiya A."/>
            <person name="Narusaka M."/>
            <person name="Shin-i T."/>
            <person name="Nakagawa M."/>
            <person name="Sakamoto N."/>
            <person name="Oishi K."/>
            <person name="Kohara Y."/>
            <person name="Kobayashi M."/>
            <person name="Toyoda A."/>
            <person name="Sakaki Y."/>
            <person name="Sakurai T."/>
            <person name="Iida K."/>
            <person name="Akiyama K."/>
            <person name="Satou M."/>
            <person name="Toyoda T."/>
            <person name="Konagaya A."/>
            <person name="Carninci P."/>
            <person name="Kawai J."/>
            <person name="Hayashizaki Y."/>
            <person name="Shinozaki K."/>
        </authorList>
    </citation>
    <scope>NUCLEOTIDE SEQUENCE [LARGE SCALE MRNA] OF 7-366</scope>
    <source>
        <strain>cv. Columbia</strain>
    </source>
</reference>
<reference key="5">
    <citation type="journal article" date="2003" name="Science">
        <title>Empirical analysis of transcriptional activity in the Arabidopsis genome.</title>
        <authorList>
            <person name="Yamada K."/>
            <person name="Lim J."/>
            <person name="Dale J.M."/>
            <person name="Chen H."/>
            <person name="Shinn P."/>
            <person name="Palm C.J."/>
            <person name="Southwick A.M."/>
            <person name="Wu H.C."/>
            <person name="Kim C.J."/>
            <person name="Nguyen M."/>
            <person name="Pham P.K."/>
            <person name="Cheuk R.F."/>
            <person name="Karlin-Newmann G."/>
            <person name="Liu S.X."/>
            <person name="Lam B."/>
            <person name="Sakano H."/>
            <person name="Wu T."/>
            <person name="Yu G."/>
            <person name="Miranda M."/>
            <person name="Quach H.L."/>
            <person name="Tripp M."/>
            <person name="Chang C.H."/>
            <person name="Lee J.M."/>
            <person name="Toriumi M.J."/>
            <person name="Chan M.M."/>
            <person name="Tang C.C."/>
            <person name="Onodera C.S."/>
            <person name="Deng J.M."/>
            <person name="Akiyama K."/>
            <person name="Ansari Y."/>
            <person name="Arakawa T."/>
            <person name="Banh J."/>
            <person name="Banno F."/>
            <person name="Bowser L."/>
            <person name="Brooks S.Y."/>
            <person name="Carninci P."/>
            <person name="Chao Q."/>
            <person name="Choy N."/>
            <person name="Enju A."/>
            <person name="Goldsmith A.D."/>
            <person name="Gurjal M."/>
            <person name="Hansen N.F."/>
            <person name="Hayashizaki Y."/>
            <person name="Johnson-Hopson C."/>
            <person name="Hsuan V.W."/>
            <person name="Iida K."/>
            <person name="Karnes M."/>
            <person name="Khan S."/>
            <person name="Koesema E."/>
            <person name="Ishida J."/>
            <person name="Jiang P.X."/>
            <person name="Jones T."/>
            <person name="Kawai J."/>
            <person name="Kamiya A."/>
            <person name="Meyers C."/>
            <person name="Nakajima M."/>
            <person name="Narusaka M."/>
            <person name="Seki M."/>
            <person name="Sakurai T."/>
            <person name="Satou M."/>
            <person name="Tamse R."/>
            <person name="Vaysberg M."/>
            <person name="Wallender E.K."/>
            <person name="Wong C."/>
            <person name="Yamamura Y."/>
            <person name="Yuan S."/>
            <person name="Shinozaki K."/>
            <person name="Davis R.W."/>
            <person name="Theologis A."/>
            <person name="Ecker J.R."/>
        </authorList>
    </citation>
    <scope>NUCLEOTIDE SEQUENCE [LARGE SCALE MRNA] OF 92-366</scope>
    <source>
        <strain>cv. Columbia</strain>
    </source>
</reference>
<reference key="6">
    <citation type="journal article" date="2004" name="Prog. Lipid Res.">
        <title>GDSL family of serine esterases/lipases.</title>
        <authorList>
            <person name="Akoh C.C."/>
            <person name="Lee G.-C."/>
            <person name="Liaw Y.-C."/>
            <person name="Huang T.-H."/>
            <person name="Shaw J.-F."/>
        </authorList>
    </citation>
    <scope>REVIEW</scope>
</reference>
<reference key="7">
    <citation type="journal article" date="2008" name="Pak. J. Biol. Sci.">
        <title>Sequence analysis of GDSL lipase gene family in Arabidopsis thaliana.</title>
        <authorList>
            <person name="Ling H."/>
        </authorList>
    </citation>
    <scope>GENE FAMILY</scope>
</reference>
<accession>Q9CA68</accession>
<accession>Q0WS24</accession>
<accession>Q84WK6</accession>
<keyword id="KW-0325">Glycoprotein</keyword>
<keyword id="KW-0378">Hydrolase</keyword>
<keyword id="KW-0442">Lipid degradation</keyword>
<keyword id="KW-0443">Lipid metabolism</keyword>
<keyword id="KW-1185">Reference proteome</keyword>
<keyword id="KW-0964">Secreted</keyword>
<keyword id="KW-0732">Signal</keyword>
<feature type="signal peptide" evidence="2">
    <location>
        <begin position="1"/>
        <end position="20"/>
    </location>
</feature>
<feature type="chain" id="PRO_0000367372" description="GDSL esterase/lipase At1g74460">
    <location>
        <begin position="21"/>
        <end position="366"/>
    </location>
</feature>
<feature type="active site" description="Nucleophile" evidence="1">
    <location>
        <position position="30"/>
    </location>
</feature>
<feature type="active site" evidence="1">
    <location>
        <position position="320"/>
    </location>
</feature>
<feature type="active site" evidence="1">
    <location>
        <position position="323"/>
    </location>
</feature>
<feature type="glycosylation site" description="N-linked (GlcNAc...) asparagine" evidence="2">
    <location>
        <position position="113"/>
    </location>
</feature>
<feature type="glycosylation site" description="N-linked (GlcNAc...) asparagine" evidence="2">
    <location>
        <position position="260"/>
    </location>
</feature>
<name>GDL31_ARATH</name>
<evidence type="ECO:0000250" key="1"/>
<evidence type="ECO:0000255" key="2"/>
<evidence type="ECO:0000305" key="3"/>
<protein>
    <recommendedName>
        <fullName>GDSL esterase/lipase At1g74460</fullName>
        <ecNumber>3.1.1.-</ecNumber>
    </recommendedName>
    <alternativeName>
        <fullName>Extracellular lipase At1g74460</fullName>
    </alternativeName>
</protein>